<comment type="function">
    <text evidence="1">Catalyzes the NADPH-dependent rearrangement and reduction of 1-deoxy-D-xylulose-5-phosphate (DXP) to 2-C-methyl-D-erythritol 4-phosphate (MEP).</text>
</comment>
<comment type="catalytic activity">
    <reaction evidence="1">
        <text>2-C-methyl-D-erythritol 4-phosphate + NADP(+) = 1-deoxy-D-xylulose 5-phosphate + NADPH + H(+)</text>
        <dbReference type="Rhea" id="RHEA:13717"/>
        <dbReference type="ChEBI" id="CHEBI:15378"/>
        <dbReference type="ChEBI" id="CHEBI:57783"/>
        <dbReference type="ChEBI" id="CHEBI:57792"/>
        <dbReference type="ChEBI" id="CHEBI:58262"/>
        <dbReference type="ChEBI" id="CHEBI:58349"/>
        <dbReference type="EC" id="1.1.1.267"/>
    </reaction>
    <physiologicalReaction direction="right-to-left" evidence="1">
        <dbReference type="Rhea" id="RHEA:13719"/>
    </physiologicalReaction>
</comment>
<comment type="cofactor">
    <cofactor evidence="1">
        <name>Mg(2+)</name>
        <dbReference type="ChEBI" id="CHEBI:18420"/>
    </cofactor>
    <cofactor evidence="1">
        <name>Mn(2+)</name>
        <dbReference type="ChEBI" id="CHEBI:29035"/>
    </cofactor>
</comment>
<comment type="pathway">
    <text evidence="1">Isoprenoid biosynthesis; isopentenyl diphosphate biosynthesis via DXP pathway; isopentenyl diphosphate from 1-deoxy-D-xylulose 5-phosphate: step 1/6.</text>
</comment>
<comment type="similarity">
    <text evidence="1">Belongs to the DXR family.</text>
</comment>
<accession>Q7MUW3</accession>
<protein>
    <recommendedName>
        <fullName evidence="1">1-deoxy-D-xylulose 5-phosphate reductoisomerase</fullName>
        <shortName evidence="1">DXP reductoisomerase</shortName>
        <ecNumber evidence="1">1.1.1.267</ecNumber>
    </recommendedName>
    <alternativeName>
        <fullName evidence="1">1-deoxyxylulose-5-phosphate reductoisomerase</fullName>
    </alternativeName>
    <alternativeName>
        <fullName evidence="1">2-C-methyl-D-erythritol 4-phosphate synthase</fullName>
    </alternativeName>
</protein>
<proteinExistence type="inferred from homology"/>
<organism>
    <name type="scientific">Porphyromonas gingivalis (strain ATCC BAA-308 / W83)</name>
    <dbReference type="NCBI Taxonomy" id="242619"/>
    <lineage>
        <taxon>Bacteria</taxon>
        <taxon>Pseudomonadati</taxon>
        <taxon>Bacteroidota</taxon>
        <taxon>Bacteroidia</taxon>
        <taxon>Bacteroidales</taxon>
        <taxon>Porphyromonadaceae</taxon>
        <taxon>Porphyromonas</taxon>
    </lineage>
</organism>
<sequence>MKKNIAILGSTGSIGTQTLDIIHLNPDLFDVYLLTANNNVDLLIRQAREYRPEIVVIANDQKYHLIQEALADLPIKVWCGAEAIADAVTAPDIDMVVTAMVGYSGLLPTIKAIEARKMIALANKETLVVAGELIMRLAQDNQVPILPVDSEHSAIFQALLGERQRPEKILLTASGGPFLHLTAEELQHATREQALRHPNWNMGAKVTIDSASLMNKGFEMIEAKWLFEMQPDEIEILVHPQSIIHSMVQFRDGSVKAQLGIPDMRLPISYALGITHRIPNDYPRVDFTATPLTFERPDLERFPNLSYAFDAIRLGGNAPCALNAANEIAVTAFLRDEISFTDMSRLLYEVMEKHELFREVSLPTFIETDSNTRRVAESLLPKFRR</sequence>
<dbReference type="EC" id="1.1.1.267" evidence="1"/>
<dbReference type="EMBL" id="AE015924">
    <property type="protein sequence ID" value="AAQ66428.1"/>
    <property type="molecule type" value="Genomic_DNA"/>
</dbReference>
<dbReference type="RefSeq" id="WP_005874315.1">
    <property type="nucleotide sequence ID" value="NC_002950.2"/>
</dbReference>
<dbReference type="SMR" id="Q7MUW3"/>
<dbReference type="STRING" id="242619.PG_1364"/>
<dbReference type="EnsemblBacteria" id="AAQ66428">
    <property type="protein sequence ID" value="AAQ66428"/>
    <property type="gene ID" value="PG_1364"/>
</dbReference>
<dbReference type="KEGG" id="pgi:PG_1364"/>
<dbReference type="eggNOG" id="COG0743">
    <property type="taxonomic scope" value="Bacteria"/>
</dbReference>
<dbReference type="HOGENOM" id="CLU_035714_4_0_10"/>
<dbReference type="UniPathway" id="UPA00056">
    <property type="reaction ID" value="UER00092"/>
</dbReference>
<dbReference type="Proteomes" id="UP000000588">
    <property type="component" value="Chromosome"/>
</dbReference>
<dbReference type="GO" id="GO:0030604">
    <property type="term" value="F:1-deoxy-D-xylulose-5-phosphate reductoisomerase activity"/>
    <property type="evidence" value="ECO:0007669"/>
    <property type="project" value="UniProtKB-UniRule"/>
</dbReference>
<dbReference type="GO" id="GO:0030145">
    <property type="term" value="F:manganese ion binding"/>
    <property type="evidence" value="ECO:0007669"/>
    <property type="project" value="TreeGrafter"/>
</dbReference>
<dbReference type="GO" id="GO:0070402">
    <property type="term" value="F:NADPH binding"/>
    <property type="evidence" value="ECO:0007669"/>
    <property type="project" value="InterPro"/>
</dbReference>
<dbReference type="GO" id="GO:0051484">
    <property type="term" value="P:isopentenyl diphosphate biosynthetic process, methylerythritol 4-phosphate pathway involved in terpenoid biosynthetic process"/>
    <property type="evidence" value="ECO:0007669"/>
    <property type="project" value="TreeGrafter"/>
</dbReference>
<dbReference type="FunFam" id="3.40.50.720:FF:000045">
    <property type="entry name" value="1-deoxy-D-xylulose 5-phosphate reductoisomerase"/>
    <property type="match status" value="1"/>
</dbReference>
<dbReference type="Gene3D" id="1.10.1740.10">
    <property type="match status" value="1"/>
</dbReference>
<dbReference type="Gene3D" id="3.40.50.720">
    <property type="entry name" value="NAD(P)-binding Rossmann-like Domain"/>
    <property type="match status" value="1"/>
</dbReference>
<dbReference type="HAMAP" id="MF_00183">
    <property type="entry name" value="DXP_reductoisom"/>
    <property type="match status" value="1"/>
</dbReference>
<dbReference type="InterPro" id="IPR003821">
    <property type="entry name" value="DXP_reductoisomerase"/>
</dbReference>
<dbReference type="InterPro" id="IPR013644">
    <property type="entry name" value="DXP_reductoisomerase_C"/>
</dbReference>
<dbReference type="InterPro" id="IPR013512">
    <property type="entry name" value="DXP_reductoisomerase_N"/>
</dbReference>
<dbReference type="InterPro" id="IPR026877">
    <property type="entry name" value="DXPR_C"/>
</dbReference>
<dbReference type="InterPro" id="IPR036169">
    <property type="entry name" value="DXPR_C_sf"/>
</dbReference>
<dbReference type="InterPro" id="IPR036291">
    <property type="entry name" value="NAD(P)-bd_dom_sf"/>
</dbReference>
<dbReference type="NCBIfam" id="TIGR00243">
    <property type="entry name" value="Dxr"/>
    <property type="match status" value="1"/>
</dbReference>
<dbReference type="NCBIfam" id="NF009114">
    <property type="entry name" value="PRK12464.1"/>
    <property type="match status" value="1"/>
</dbReference>
<dbReference type="PANTHER" id="PTHR30525">
    <property type="entry name" value="1-DEOXY-D-XYLULOSE 5-PHOSPHATE REDUCTOISOMERASE"/>
    <property type="match status" value="1"/>
</dbReference>
<dbReference type="PANTHER" id="PTHR30525:SF0">
    <property type="entry name" value="1-DEOXY-D-XYLULOSE 5-PHOSPHATE REDUCTOISOMERASE, CHLOROPLASTIC"/>
    <property type="match status" value="1"/>
</dbReference>
<dbReference type="Pfam" id="PF08436">
    <property type="entry name" value="DXP_redisom_C"/>
    <property type="match status" value="1"/>
</dbReference>
<dbReference type="Pfam" id="PF02670">
    <property type="entry name" value="DXP_reductoisom"/>
    <property type="match status" value="1"/>
</dbReference>
<dbReference type="Pfam" id="PF13288">
    <property type="entry name" value="DXPR_C"/>
    <property type="match status" value="1"/>
</dbReference>
<dbReference type="PIRSF" id="PIRSF006205">
    <property type="entry name" value="Dxp_reductismrs"/>
    <property type="match status" value="1"/>
</dbReference>
<dbReference type="SUPFAM" id="SSF69055">
    <property type="entry name" value="1-deoxy-D-xylulose-5-phosphate reductoisomerase, C-terminal domain"/>
    <property type="match status" value="1"/>
</dbReference>
<dbReference type="SUPFAM" id="SSF55347">
    <property type="entry name" value="Glyceraldehyde-3-phosphate dehydrogenase-like, C-terminal domain"/>
    <property type="match status" value="1"/>
</dbReference>
<dbReference type="SUPFAM" id="SSF51735">
    <property type="entry name" value="NAD(P)-binding Rossmann-fold domains"/>
    <property type="match status" value="1"/>
</dbReference>
<gene>
    <name evidence="1" type="primary">dxr</name>
    <name type="ordered locus">PG_1364</name>
</gene>
<evidence type="ECO:0000255" key="1">
    <source>
        <dbReference type="HAMAP-Rule" id="MF_00183"/>
    </source>
</evidence>
<name>DXR_PORGI</name>
<keyword id="KW-0414">Isoprene biosynthesis</keyword>
<keyword id="KW-0464">Manganese</keyword>
<keyword id="KW-0479">Metal-binding</keyword>
<keyword id="KW-0521">NADP</keyword>
<keyword id="KW-0560">Oxidoreductase</keyword>
<keyword id="KW-1185">Reference proteome</keyword>
<feature type="chain" id="PRO_0000163691" description="1-deoxy-D-xylulose 5-phosphate reductoisomerase">
    <location>
        <begin position="1"/>
        <end position="385"/>
    </location>
</feature>
<feature type="binding site" evidence="1">
    <location>
        <position position="11"/>
    </location>
    <ligand>
        <name>NADPH</name>
        <dbReference type="ChEBI" id="CHEBI:57783"/>
    </ligand>
</feature>
<feature type="binding site" evidence="1">
    <location>
        <position position="12"/>
    </location>
    <ligand>
        <name>NADPH</name>
        <dbReference type="ChEBI" id="CHEBI:57783"/>
    </ligand>
</feature>
<feature type="binding site" evidence="1">
    <location>
        <position position="13"/>
    </location>
    <ligand>
        <name>NADPH</name>
        <dbReference type="ChEBI" id="CHEBI:57783"/>
    </ligand>
</feature>
<feature type="binding site" evidence="1">
    <location>
        <position position="14"/>
    </location>
    <ligand>
        <name>NADPH</name>
        <dbReference type="ChEBI" id="CHEBI:57783"/>
    </ligand>
</feature>
<feature type="binding site" evidence="1">
    <location>
        <position position="39"/>
    </location>
    <ligand>
        <name>NADPH</name>
        <dbReference type="ChEBI" id="CHEBI:57783"/>
    </ligand>
</feature>
<feature type="binding site" evidence="1">
    <location>
        <position position="123"/>
    </location>
    <ligand>
        <name>NADPH</name>
        <dbReference type="ChEBI" id="CHEBI:57783"/>
    </ligand>
</feature>
<feature type="binding site" evidence="1">
    <location>
        <position position="124"/>
    </location>
    <ligand>
        <name>1-deoxy-D-xylulose 5-phosphate</name>
        <dbReference type="ChEBI" id="CHEBI:57792"/>
    </ligand>
</feature>
<feature type="binding site" evidence="1">
    <location>
        <position position="125"/>
    </location>
    <ligand>
        <name>NADPH</name>
        <dbReference type="ChEBI" id="CHEBI:57783"/>
    </ligand>
</feature>
<feature type="binding site" evidence="1">
    <location>
        <position position="149"/>
    </location>
    <ligand>
        <name>Mn(2+)</name>
        <dbReference type="ChEBI" id="CHEBI:29035"/>
    </ligand>
</feature>
<feature type="binding site" evidence="1">
    <location>
        <position position="150"/>
    </location>
    <ligand>
        <name>1-deoxy-D-xylulose 5-phosphate</name>
        <dbReference type="ChEBI" id="CHEBI:57792"/>
    </ligand>
</feature>
<feature type="binding site" evidence="1">
    <location>
        <position position="151"/>
    </location>
    <ligand>
        <name>1-deoxy-D-xylulose 5-phosphate</name>
        <dbReference type="ChEBI" id="CHEBI:57792"/>
    </ligand>
</feature>
<feature type="binding site" evidence="1">
    <location>
        <position position="151"/>
    </location>
    <ligand>
        <name>Mn(2+)</name>
        <dbReference type="ChEBI" id="CHEBI:29035"/>
    </ligand>
</feature>
<feature type="binding site" evidence="1">
    <location>
        <position position="174"/>
    </location>
    <ligand>
        <name>1-deoxy-D-xylulose 5-phosphate</name>
        <dbReference type="ChEBI" id="CHEBI:57792"/>
    </ligand>
</feature>
<feature type="binding site" evidence="1">
    <location>
        <position position="197"/>
    </location>
    <ligand>
        <name>1-deoxy-D-xylulose 5-phosphate</name>
        <dbReference type="ChEBI" id="CHEBI:57792"/>
    </ligand>
</feature>
<feature type="binding site" evidence="1">
    <location>
        <position position="203"/>
    </location>
    <ligand>
        <name>NADPH</name>
        <dbReference type="ChEBI" id="CHEBI:57783"/>
    </ligand>
</feature>
<feature type="binding site" evidence="1">
    <location>
        <position position="210"/>
    </location>
    <ligand>
        <name>1-deoxy-D-xylulose 5-phosphate</name>
        <dbReference type="ChEBI" id="CHEBI:57792"/>
    </ligand>
</feature>
<feature type="binding site" evidence="1">
    <location>
        <position position="215"/>
    </location>
    <ligand>
        <name>1-deoxy-D-xylulose 5-phosphate</name>
        <dbReference type="ChEBI" id="CHEBI:57792"/>
    </ligand>
</feature>
<feature type="binding site" evidence="1">
    <location>
        <position position="216"/>
    </location>
    <ligand>
        <name>1-deoxy-D-xylulose 5-phosphate</name>
        <dbReference type="ChEBI" id="CHEBI:57792"/>
    </ligand>
</feature>
<feature type="binding site" evidence="1">
    <location>
        <position position="219"/>
    </location>
    <ligand>
        <name>1-deoxy-D-xylulose 5-phosphate</name>
        <dbReference type="ChEBI" id="CHEBI:57792"/>
    </ligand>
</feature>
<feature type="binding site" evidence="1">
    <location>
        <position position="219"/>
    </location>
    <ligand>
        <name>Mn(2+)</name>
        <dbReference type="ChEBI" id="CHEBI:29035"/>
    </ligand>
</feature>
<reference key="1">
    <citation type="journal article" date="2003" name="J. Bacteriol.">
        <title>Complete genome sequence of the oral pathogenic bacterium Porphyromonas gingivalis strain W83.</title>
        <authorList>
            <person name="Nelson K.E."/>
            <person name="Fleischmann R.D."/>
            <person name="DeBoy R.T."/>
            <person name="Paulsen I.T."/>
            <person name="Fouts D.E."/>
            <person name="Eisen J.A."/>
            <person name="Daugherty S.C."/>
            <person name="Dodson R.J."/>
            <person name="Durkin A.S."/>
            <person name="Gwinn M.L."/>
            <person name="Haft D.H."/>
            <person name="Kolonay J.F."/>
            <person name="Nelson W.C."/>
            <person name="Mason T.M."/>
            <person name="Tallon L."/>
            <person name="Gray J."/>
            <person name="Granger D."/>
            <person name="Tettelin H."/>
            <person name="Dong H."/>
            <person name="Galvin J.L."/>
            <person name="Duncan M.J."/>
            <person name="Dewhirst F.E."/>
            <person name="Fraser C.M."/>
        </authorList>
    </citation>
    <scope>NUCLEOTIDE SEQUENCE [LARGE SCALE GENOMIC DNA]</scope>
    <source>
        <strain>ATCC BAA-308 / W83</strain>
    </source>
</reference>